<evidence type="ECO:0000255" key="1">
    <source>
        <dbReference type="HAMAP-Rule" id="MF_01703"/>
    </source>
</evidence>
<name>MSBA_PSEA6</name>
<feature type="chain" id="PRO_0000271638" description="ATP-dependent lipid A-core flippase">
    <location>
        <begin position="1"/>
        <end position="585"/>
    </location>
</feature>
<feature type="transmembrane region" description="Helical" evidence="1">
    <location>
        <begin position="23"/>
        <end position="43"/>
    </location>
</feature>
<feature type="transmembrane region" description="Helical" evidence="1">
    <location>
        <begin position="64"/>
        <end position="84"/>
    </location>
</feature>
<feature type="transmembrane region" description="Helical" evidence="1">
    <location>
        <begin position="140"/>
        <end position="160"/>
    </location>
</feature>
<feature type="transmembrane region" description="Helical" evidence="1">
    <location>
        <begin position="163"/>
        <end position="183"/>
    </location>
</feature>
<feature type="transmembrane region" description="Helical" evidence="1">
    <location>
        <begin position="247"/>
        <end position="267"/>
    </location>
</feature>
<feature type="transmembrane region" description="Helical" evidence="1">
    <location>
        <begin position="273"/>
        <end position="293"/>
    </location>
</feature>
<feature type="domain" description="ABC transmembrane type-1" evidence="1">
    <location>
        <begin position="27"/>
        <end position="308"/>
    </location>
</feature>
<feature type="domain" description="ABC transporter" evidence="1">
    <location>
        <begin position="340"/>
        <end position="576"/>
    </location>
</feature>
<feature type="binding site" evidence="1">
    <location>
        <begin position="374"/>
        <end position="381"/>
    </location>
    <ligand>
        <name>ATP</name>
        <dbReference type="ChEBI" id="CHEBI:30616"/>
    </ligand>
</feature>
<proteinExistence type="inferred from homology"/>
<protein>
    <recommendedName>
        <fullName evidence="1">ATP-dependent lipid A-core flippase</fullName>
        <ecNumber evidence="1">7.5.2.6</ecNumber>
    </recommendedName>
    <alternativeName>
        <fullName evidence="1">Lipid A export ATP-binding/permease protein MsbA</fullName>
    </alternativeName>
</protein>
<gene>
    <name evidence="1" type="primary">msbA</name>
    <name type="ordered locus">Patl_1780</name>
</gene>
<reference key="1">
    <citation type="submission" date="2006-06" db="EMBL/GenBank/DDBJ databases">
        <title>Complete sequence of Pseudoalteromonas atlantica T6c.</title>
        <authorList>
            <consortium name="US DOE Joint Genome Institute"/>
            <person name="Copeland A."/>
            <person name="Lucas S."/>
            <person name="Lapidus A."/>
            <person name="Barry K."/>
            <person name="Detter J.C."/>
            <person name="Glavina del Rio T."/>
            <person name="Hammon N."/>
            <person name="Israni S."/>
            <person name="Dalin E."/>
            <person name="Tice H."/>
            <person name="Pitluck S."/>
            <person name="Saunders E."/>
            <person name="Brettin T."/>
            <person name="Bruce D."/>
            <person name="Han C."/>
            <person name="Tapia R."/>
            <person name="Gilna P."/>
            <person name="Schmutz J."/>
            <person name="Larimer F."/>
            <person name="Land M."/>
            <person name="Hauser L."/>
            <person name="Kyrpides N."/>
            <person name="Kim E."/>
            <person name="Karls A.C."/>
            <person name="Bartlett D."/>
            <person name="Higgins B.P."/>
            <person name="Richardson P."/>
        </authorList>
    </citation>
    <scope>NUCLEOTIDE SEQUENCE [LARGE SCALE GENOMIC DNA]</scope>
    <source>
        <strain>T6c / ATCC BAA-1087</strain>
    </source>
</reference>
<keyword id="KW-0067">ATP-binding</keyword>
<keyword id="KW-0997">Cell inner membrane</keyword>
<keyword id="KW-1003">Cell membrane</keyword>
<keyword id="KW-0445">Lipid transport</keyword>
<keyword id="KW-0472">Membrane</keyword>
<keyword id="KW-0547">Nucleotide-binding</keyword>
<keyword id="KW-1278">Translocase</keyword>
<keyword id="KW-0812">Transmembrane</keyword>
<keyword id="KW-1133">Transmembrane helix</keyword>
<keyword id="KW-0813">Transport</keyword>
<comment type="function">
    <text evidence="1">Involved in lipopolysaccharide (LPS) biosynthesis. Translocates lipid A-core from the inner to the outer leaflet of the inner membrane. Transmembrane domains (TMD) form a pore in the inner membrane and the ATP-binding domain (NBD) is responsible for energy generation.</text>
</comment>
<comment type="catalytic activity">
    <reaction evidence="1">
        <text>ATP + H2O + lipid A-core oligosaccharideSide 1 = ADP + phosphate + lipid A-core oligosaccharideSide 2.</text>
        <dbReference type="EC" id="7.5.2.6"/>
    </reaction>
</comment>
<comment type="subunit">
    <text evidence="1">Homodimer.</text>
</comment>
<comment type="subcellular location">
    <subcellularLocation>
        <location evidence="1">Cell inner membrane</location>
        <topology evidence="1">Multi-pass membrane protein</topology>
    </subcellularLocation>
</comment>
<comment type="domain">
    <text evidence="1">In MsbA the ATP-binding domain (NBD) and the transmembrane domain (TMD) are fused.</text>
</comment>
<comment type="similarity">
    <text evidence="1">Belongs to the ABC transporter superfamily. Lipid exporter (TC 3.A.1.106) family.</text>
</comment>
<dbReference type="EC" id="7.5.2.6" evidence="1"/>
<dbReference type="EMBL" id="CP000388">
    <property type="protein sequence ID" value="ABG40301.1"/>
    <property type="molecule type" value="Genomic_DNA"/>
</dbReference>
<dbReference type="RefSeq" id="WP_011574602.1">
    <property type="nucleotide sequence ID" value="NC_008228.1"/>
</dbReference>
<dbReference type="SMR" id="Q15UY7"/>
<dbReference type="STRING" id="342610.Patl_1780"/>
<dbReference type="KEGG" id="pat:Patl_1780"/>
<dbReference type="eggNOG" id="COG1132">
    <property type="taxonomic scope" value="Bacteria"/>
</dbReference>
<dbReference type="HOGENOM" id="CLU_000604_84_3_6"/>
<dbReference type="OrthoDB" id="9806127at2"/>
<dbReference type="Proteomes" id="UP000001981">
    <property type="component" value="Chromosome"/>
</dbReference>
<dbReference type="GO" id="GO:0005886">
    <property type="term" value="C:plasma membrane"/>
    <property type="evidence" value="ECO:0007669"/>
    <property type="project" value="UniProtKB-SubCell"/>
</dbReference>
<dbReference type="GO" id="GO:0015421">
    <property type="term" value="F:ABC-type oligopeptide transporter activity"/>
    <property type="evidence" value="ECO:0007669"/>
    <property type="project" value="TreeGrafter"/>
</dbReference>
<dbReference type="GO" id="GO:0005524">
    <property type="term" value="F:ATP binding"/>
    <property type="evidence" value="ECO:0007669"/>
    <property type="project" value="UniProtKB-KW"/>
</dbReference>
<dbReference type="GO" id="GO:0016887">
    <property type="term" value="F:ATP hydrolysis activity"/>
    <property type="evidence" value="ECO:0007669"/>
    <property type="project" value="InterPro"/>
</dbReference>
<dbReference type="GO" id="GO:0034040">
    <property type="term" value="F:ATPase-coupled lipid transmembrane transporter activity"/>
    <property type="evidence" value="ECO:0007669"/>
    <property type="project" value="InterPro"/>
</dbReference>
<dbReference type="CDD" id="cd18552">
    <property type="entry name" value="ABC_6TM_MsbA_like"/>
    <property type="match status" value="1"/>
</dbReference>
<dbReference type="FunFam" id="3.40.50.300:FF:000140">
    <property type="entry name" value="Lipid A export ATP-binding/permease protein MsbA"/>
    <property type="match status" value="1"/>
</dbReference>
<dbReference type="Gene3D" id="1.20.1560.10">
    <property type="entry name" value="ABC transporter type 1, transmembrane domain"/>
    <property type="match status" value="1"/>
</dbReference>
<dbReference type="Gene3D" id="3.40.50.300">
    <property type="entry name" value="P-loop containing nucleotide triphosphate hydrolases"/>
    <property type="match status" value="1"/>
</dbReference>
<dbReference type="InterPro" id="IPR003593">
    <property type="entry name" value="AAA+_ATPase"/>
</dbReference>
<dbReference type="InterPro" id="IPR011527">
    <property type="entry name" value="ABC1_TM_dom"/>
</dbReference>
<dbReference type="InterPro" id="IPR036640">
    <property type="entry name" value="ABC1_TM_sf"/>
</dbReference>
<dbReference type="InterPro" id="IPR003439">
    <property type="entry name" value="ABC_transporter-like_ATP-bd"/>
</dbReference>
<dbReference type="InterPro" id="IPR017871">
    <property type="entry name" value="ABC_transporter-like_CS"/>
</dbReference>
<dbReference type="InterPro" id="IPR011917">
    <property type="entry name" value="ABC_transpr_lipidA"/>
</dbReference>
<dbReference type="InterPro" id="IPR027417">
    <property type="entry name" value="P-loop_NTPase"/>
</dbReference>
<dbReference type="InterPro" id="IPR039421">
    <property type="entry name" value="Type_1_exporter"/>
</dbReference>
<dbReference type="NCBIfam" id="TIGR02203">
    <property type="entry name" value="MsbA_lipidA"/>
    <property type="match status" value="1"/>
</dbReference>
<dbReference type="PANTHER" id="PTHR43394:SF1">
    <property type="entry name" value="ATP-BINDING CASSETTE SUB-FAMILY B MEMBER 10, MITOCHONDRIAL"/>
    <property type="match status" value="1"/>
</dbReference>
<dbReference type="PANTHER" id="PTHR43394">
    <property type="entry name" value="ATP-DEPENDENT PERMEASE MDL1, MITOCHONDRIAL"/>
    <property type="match status" value="1"/>
</dbReference>
<dbReference type="Pfam" id="PF00664">
    <property type="entry name" value="ABC_membrane"/>
    <property type="match status" value="1"/>
</dbReference>
<dbReference type="Pfam" id="PF00005">
    <property type="entry name" value="ABC_tran"/>
    <property type="match status" value="1"/>
</dbReference>
<dbReference type="SMART" id="SM00382">
    <property type="entry name" value="AAA"/>
    <property type="match status" value="1"/>
</dbReference>
<dbReference type="SUPFAM" id="SSF90123">
    <property type="entry name" value="ABC transporter transmembrane region"/>
    <property type="match status" value="1"/>
</dbReference>
<dbReference type="SUPFAM" id="SSF52540">
    <property type="entry name" value="P-loop containing nucleoside triphosphate hydrolases"/>
    <property type="match status" value="1"/>
</dbReference>
<dbReference type="PROSITE" id="PS50929">
    <property type="entry name" value="ABC_TM1F"/>
    <property type="match status" value="1"/>
</dbReference>
<dbReference type="PROSITE" id="PS00211">
    <property type="entry name" value="ABC_TRANSPORTER_1"/>
    <property type="match status" value="1"/>
</dbReference>
<dbReference type="PROSITE" id="PS50893">
    <property type="entry name" value="ABC_TRANSPORTER_2"/>
    <property type="match status" value="1"/>
</dbReference>
<dbReference type="PROSITE" id="PS51239">
    <property type="entry name" value="MSBA"/>
    <property type="match status" value="1"/>
</dbReference>
<organism>
    <name type="scientific">Pseudoalteromonas atlantica (strain T6c / ATCC BAA-1087)</name>
    <dbReference type="NCBI Taxonomy" id="3042615"/>
    <lineage>
        <taxon>Bacteria</taxon>
        <taxon>Pseudomonadati</taxon>
        <taxon>Pseudomonadota</taxon>
        <taxon>Gammaproteobacteria</taxon>
        <taxon>Alteromonadales</taxon>
        <taxon>Alteromonadaceae</taxon>
        <taxon>Paraglaciecola</taxon>
    </lineage>
</organism>
<sequence>MTHTLPTQNVFKRFAVYLKDFKLAFGVAIIGMVGYSLIDAYVISLLQPIIDGNGGKWDYDYLRIAAYFVIPVFIARGIFNFMGTYTLSWISSQVVMKMREQLFHQYMHLPVEFHDHHPSGQLISKVIYDTEQVAGAAGKAFLTLVREGALVFGLLFWMFYHSWQLSLVFILIGPLVAMIVSVVSKRFRLVSKNIQQAMGNLTSSAEQIIKGHKVVLMFGGQDLEASRFAKKNNNNRQQNMKLVIAQILSVSSIQVIASVALAVVLYISSKPNFITDLTPGTFVTVVVAMTMLLKPLKQLTTVNSEFQKGMAACVSIFSVLDNAIEKDTGSKVLDKAKGKLEFRDVTFHYPNKEEAALSDMSFTVEPGKTFALVGRSGSGKSTISSLLTRFYDAQQGTILLDDVPLQDFKLKDLRRQFALVSQHVTLFNDTIANNIAYGSEGRVTPEQVLAAAKTAHALEFIEQLPNGMETLIGENGLMLSGGQRQRLAIARAVLLDAPVLILDEATSALDTESERLIQDALETLQQDRTSIVVAHRLSTIESADQILVIERGRILEQGDHASLLSEDGAYAQLHKLQFGDGQTDA</sequence>
<accession>Q15UY7</accession>